<gene>
    <name evidence="1" type="primary">ruvA</name>
    <name type="ordered locus">SAV_6834</name>
</gene>
<evidence type="ECO:0000255" key="1">
    <source>
        <dbReference type="HAMAP-Rule" id="MF_00031"/>
    </source>
</evidence>
<reference key="1">
    <citation type="journal article" date="2001" name="Proc. Natl. Acad. Sci. U.S.A.">
        <title>Genome sequence of an industrial microorganism Streptomyces avermitilis: deducing the ability of producing secondary metabolites.</title>
        <authorList>
            <person name="Omura S."/>
            <person name="Ikeda H."/>
            <person name="Ishikawa J."/>
            <person name="Hanamoto A."/>
            <person name="Takahashi C."/>
            <person name="Shinose M."/>
            <person name="Takahashi Y."/>
            <person name="Horikawa H."/>
            <person name="Nakazawa H."/>
            <person name="Osonoe T."/>
            <person name="Kikuchi H."/>
            <person name="Shiba T."/>
            <person name="Sakaki Y."/>
            <person name="Hattori M."/>
        </authorList>
    </citation>
    <scope>NUCLEOTIDE SEQUENCE [LARGE SCALE GENOMIC DNA]</scope>
    <source>
        <strain>ATCC 31267 / DSM 46492 / JCM 5070 / NBRC 14893 / NCIMB 12804 / NRRL 8165 / MA-4680</strain>
    </source>
</reference>
<reference key="2">
    <citation type="journal article" date="2003" name="Nat. Biotechnol.">
        <title>Complete genome sequence and comparative analysis of the industrial microorganism Streptomyces avermitilis.</title>
        <authorList>
            <person name="Ikeda H."/>
            <person name="Ishikawa J."/>
            <person name="Hanamoto A."/>
            <person name="Shinose M."/>
            <person name="Kikuchi H."/>
            <person name="Shiba T."/>
            <person name="Sakaki Y."/>
            <person name="Hattori M."/>
            <person name="Omura S."/>
        </authorList>
    </citation>
    <scope>NUCLEOTIDE SEQUENCE [LARGE SCALE GENOMIC DNA]</scope>
    <source>
        <strain>ATCC 31267 / DSM 46492 / JCM 5070 / NBRC 14893 / NCIMB 12804 / NRRL 8165 / MA-4680</strain>
    </source>
</reference>
<proteinExistence type="inferred from homology"/>
<dbReference type="EMBL" id="BA000030">
    <property type="protein sequence ID" value="BAC74545.1"/>
    <property type="molecule type" value="Genomic_DNA"/>
</dbReference>
<dbReference type="RefSeq" id="WP_010988232.1">
    <property type="nucleotide sequence ID" value="NZ_JZJK01000082.1"/>
</dbReference>
<dbReference type="SMR" id="Q820F4"/>
<dbReference type="GeneID" id="41543909"/>
<dbReference type="KEGG" id="sma:SAVERM_6834"/>
<dbReference type="eggNOG" id="COG0632">
    <property type="taxonomic scope" value="Bacteria"/>
</dbReference>
<dbReference type="HOGENOM" id="CLU_087936_2_1_11"/>
<dbReference type="OrthoDB" id="5293449at2"/>
<dbReference type="Proteomes" id="UP000000428">
    <property type="component" value="Chromosome"/>
</dbReference>
<dbReference type="GO" id="GO:0005737">
    <property type="term" value="C:cytoplasm"/>
    <property type="evidence" value="ECO:0007669"/>
    <property type="project" value="UniProtKB-SubCell"/>
</dbReference>
<dbReference type="GO" id="GO:0009379">
    <property type="term" value="C:Holliday junction helicase complex"/>
    <property type="evidence" value="ECO:0007669"/>
    <property type="project" value="InterPro"/>
</dbReference>
<dbReference type="GO" id="GO:0048476">
    <property type="term" value="C:Holliday junction resolvase complex"/>
    <property type="evidence" value="ECO:0007669"/>
    <property type="project" value="UniProtKB-UniRule"/>
</dbReference>
<dbReference type="GO" id="GO:0005524">
    <property type="term" value="F:ATP binding"/>
    <property type="evidence" value="ECO:0007669"/>
    <property type="project" value="InterPro"/>
</dbReference>
<dbReference type="GO" id="GO:0000400">
    <property type="term" value="F:four-way junction DNA binding"/>
    <property type="evidence" value="ECO:0007669"/>
    <property type="project" value="UniProtKB-UniRule"/>
</dbReference>
<dbReference type="GO" id="GO:0009378">
    <property type="term" value="F:four-way junction helicase activity"/>
    <property type="evidence" value="ECO:0007669"/>
    <property type="project" value="InterPro"/>
</dbReference>
<dbReference type="GO" id="GO:0006310">
    <property type="term" value="P:DNA recombination"/>
    <property type="evidence" value="ECO:0007669"/>
    <property type="project" value="UniProtKB-UniRule"/>
</dbReference>
<dbReference type="GO" id="GO:0006281">
    <property type="term" value="P:DNA repair"/>
    <property type="evidence" value="ECO:0007669"/>
    <property type="project" value="UniProtKB-UniRule"/>
</dbReference>
<dbReference type="Gene3D" id="1.10.150.20">
    <property type="entry name" value="5' to 3' exonuclease, C-terminal subdomain"/>
    <property type="match status" value="1"/>
</dbReference>
<dbReference type="Gene3D" id="1.10.8.10">
    <property type="entry name" value="DNA helicase RuvA subunit, C-terminal domain"/>
    <property type="match status" value="1"/>
</dbReference>
<dbReference type="Gene3D" id="2.40.50.140">
    <property type="entry name" value="Nucleic acid-binding proteins"/>
    <property type="match status" value="1"/>
</dbReference>
<dbReference type="HAMAP" id="MF_00031">
    <property type="entry name" value="DNA_HJ_migration_RuvA"/>
    <property type="match status" value="1"/>
</dbReference>
<dbReference type="InterPro" id="IPR013849">
    <property type="entry name" value="DNA_helicase_Holl-junc_RuvA_I"/>
</dbReference>
<dbReference type="InterPro" id="IPR003583">
    <property type="entry name" value="Hlx-hairpin-Hlx_DNA-bd_motif"/>
</dbReference>
<dbReference type="InterPro" id="IPR012340">
    <property type="entry name" value="NA-bd_OB-fold"/>
</dbReference>
<dbReference type="InterPro" id="IPR000085">
    <property type="entry name" value="RuvA"/>
</dbReference>
<dbReference type="InterPro" id="IPR010994">
    <property type="entry name" value="RuvA_2-like"/>
</dbReference>
<dbReference type="InterPro" id="IPR011114">
    <property type="entry name" value="RuvA_C"/>
</dbReference>
<dbReference type="InterPro" id="IPR036267">
    <property type="entry name" value="RuvA_C_sf"/>
</dbReference>
<dbReference type="NCBIfam" id="TIGR00084">
    <property type="entry name" value="ruvA"/>
    <property type="match status" value="1"/>
</dbReference>
<dbReference type="Pfam" id="PF14520">
    <property type="entry name" value="HHH_5"/>
    <property type="match status" value="1"/>
</dbReference>
<dbReference type="Pfam" id="PF07499">
    <property type="entry name" value="RuvA_C"/>
    <property type="match status" value="1"/>
</dbReference>
<dbReference type="Pfam" id="PF01330">
    <property type="entry name" value="RuvA_N"/>
    <property type="match status" value="1"/>
</dbReference>
<dbReference type="SMART" id="SM00278">
    <property type="entry name" value="HhH1"/>
    <property type="match status" value="2"/>
</dbReference>
<dbReference type="SUPFAM" id="SSF46929">
    <property type="entry name" value="DNA helicase RuvA subunit, C-terminal domain"/>
    <property type="match status" value="1"/>
</dbReference>
<dbReference type="SUPFAM" id="SSF50249">
    <property type="entry name" value="Nucleic acid-binding proteins"/>
    <property type="match status" value="1"/>
</dbReference>
<dbReference type="SUPFAM" id="SSF47781">
    <property type="entry name" value="RuvA domain 2-like"/>
    <property type="match status" value="1"/>
</dbReference>
<keyword id="KW-0963">Cytoplasm</keyword>
<keyword id="KW-0227">DNA damage</keyword>
<keyword id="KW-0233">DNA recombination</keyword>
<keyword id="KW-0234">DNA repair</keyword>
<keyword id="KW-0238">DNA-binding</keyword>
<keyword id="KW-1185">Reference proteome</keyword>
<protein>
    <recommendedName>
        <fullName evidence="1">Holliday junction branch migration complex subunit RuvA</fullName>
    </recommendedName>
</protein>
<organism>
    <name type="scientific">Streptomyces avermitilis (strain ATCC 31267 / DSM 46492 / JCM 5070 / NBRC 14893 / NCIMB 12804 / NRRL 8165 / MA-4680)</name>
    <dbReference type="NCBI Taxonomy" id="227882"/>
    <lineage>
        <taxon>Bacteria</taxon>
        <taxon>Bacillati</taxon>
        <taxon>Actinomycetota</taxon>
        <taxon>Actinomycetes</taxon>
        <taxon>Kitasatosporales</taxon>
        <taxon>Streptomycetaceae</taxon>
        <taxon>Streptomyces</taxon>
    </lineage>
</organism>
<accession>Q820F4</accession>
<comment type="function">
    <text evidence="1">The RuvA-RuvB-RuvC complex processes Holliday junction (HJ) DNA during genetic recombination and DNA repair, while the RuvA-RuvB complex plays an important role in the rescue of blocked DNA replication forks via replication fork reversal (RFR). RuvA specifically binds to HJ cruciform DNA, conferring on it an open structure. The RuvB hexamer acts as an ATP-dependent pump, pulling dsDNA into and through the RuvAB complex. HJ branch migration allows RuvC to scan DNA until it finds its consensus sequence, where it cleaves and resolves the cruciform DNA.</text>
</comment>
<comment type="subunit">
    <text evidence="1">Homotetramer. Forms an RuvA(8)-RuvB(12)-Holliday junction (HJ) complex. HJ DNA is sandwiched between 2 RuvA tetramers; dsDNA enters through RuvA and exits via RuvB. An RuvB hexamer assembles on each DNA strand where it exits the tetramer. Each RuvB hexamer is contacted by two RuvA subunits (via domain III) on 2 adjacent RuvB subunits; this complex drives branch migration. In the full resolvosome a probable DNA-RuvA(4)-RuvB(12)-RuvC(2) complex forms which resolves the HJ.</text>
</comment>
<comment type="subcellular location">
    <subcellularLocation>
        <location evidence="1">Cytoplasm</location>
    </subcellularLocation>
</comment>
<comment type="domain">
    <text evidence="1">Has three domains with a flexible linker between the domains II and III and assumes an 'L' shape. Domain III is highly mobile and contacts RuvB.</text>
</comment>
<comment type="similarity">
    <text evidence="1">Belongs to the RuvA family.</text>
</comment>
<name>RUVA_STRAW</name>
<feature type="chain" id="PRO_0000094688" description="Holliday junction branch migration complex subunit RuvA">
    <location>
        <begin position="1"/>
        <end position="203"/>
    </location>
</feature>
<feature type="region of interest" description="Domain I" evidence="1">
    <location>
        <begin position="1"/>
        <end position="63"/>
    </location>
</feature>
<feature type="region of interest" description="Domain II" evidence="1">
    <location>
        <begin position="64"/>
        <end position="141"/>
    </location>
</feature>
<feature type="region of interest" description="Flexible linker" evidence="1">
    <location>
        <begin position="141"/>
        <end position="145"/>
    </location>
</feature>
<feature type="region of interest" description="Domain III" evidence="1">
    <location>
        <begin position="146"/>
        <end position="203"/>
    </location>
</feature>
<sequence length="203" mass="20910">MIAFVSGPVAALAPDSAVVEVGGIGIAVQCTPNTLSGLRMGREAKLATSLVVREDSLTLYGFVDDDERQVFELLQTASGVGPRLAQAMLAVHTPDALRRAVSTGDEKALVAVPGIGKKGAQKLLLELKDRLGEPLGTGGPAIGRAVTTGWREQLHAALIGLGYATREADEAVAAVAPQAEAAGGTPQVGQLLKAALQTLNRTR</sequence>